<sequence>MKKDIHPKYTTVTVTCANCGNSFETRSTKESIKVDICSNCHPFYTGKQVLVDTAGRVERFKKRFAKKNASSSASE</sequence>
<reference key="1">
    <citation type="submission" date="2008-06" db="EMBL/GenBank/DDBJ databases">
        <title>Complete sequence of Chlorobium phaeobacteroides BS1.</title>
        <authorList>
            <consortium name="US DOE Joint Genome Institute"/>
            <person name="Lucas S."/>
            <person name="Copeland A."/>
            <person name="Lapidus A."/>
            <person name="Glavina del Rio T."/>
            <person name="Dalin E."/>
            <person name="Tice H."/>
            <person name="Bruce D."/>
            <person name="Goodwin L."/>
            <person name="Pitluck S."/>
            <person name="Schmutz J."/>
            <person name="Larimer F."/>
            <person name="Land M."/>
            <person name="Hauser L."/>
            <person name="Kyrpides N."/>
            <person name="Ovchinnikova G."/>
            <person name="Li T."/>
            <person name="Liu Z."/>
            <person name="Zhao F."/>
            <person name="Overmann J."/>
            <person name="Bryant D.A."/>
            <person name="Richardson P."/>
        </authorList>
    </citation>
    <scope>NUCLEOTIDE SEQUENCE [LARGE SCALE GENOMIC DNA]</scope>
    <source>
        <strain>BS1</strain>
    </source>
</reference>
<accession>B3EMY1</accession>
<dbReference type="EMBL" id="CP001101">
    <property type="protein sequence ID" value="ACE04970.1"/>
    <property type="molecule type" value="Genomic_DNA"/>
</dbReference>
<dbReference type="SMR" id="B3EMY1"/>
<dbReference type="STRING" id="331678.Cphamn1_2060"/>
<dbReference type="KEGG" id="cpb:Cphamn1_2060"/>
<dbReference type="eggNOG" id="COG0254">
    <property type="taxonomic scope" value="Bacteria"/>
</dbReference>
<dbReference type="HOGENOM" id="CLU_114306_4_3_10"/>
<dbReference type="OrthoDB" id="9803251at2"/>
<dbReference type="GO" id="GO:1990904">
    <property type="term" value="C:ribonucleoprotein complex"/>
    <property type="evidence" value="ECO:0007669"/>
    <property type="project" value="UniProtKB-KW"/>
</dbReference>
<dbReference type="GO" id="GO:0005840">
    <property type="term" value="C:ribosome"/>
    <property type="evidence" value="ECO:0007669"/>
    <property type="project" value="UniProtKB-KW"/>
</dbReference>
<dbReference type="GO" id="GO:0019843">
    <property type="term" value="F:rRNA binding"/>
    <property type="evidence" value="ECO:0007669"/>
    <property type="project" value="UniProtKB-KW"/>
</dbReference>
<dbReference type="GO" id="GO:0003735">
    <property type="term" value="F:structural constituent of ribosome"/>
    <property type="evidence" value="ECO:0007669"/>
    <property type="project" value="InterPro"/>
</dbReference>
<dbReference type="GO" id="GO:0006412">
    <property type="term" value="P:translation"/>
    <property type="evidence" value="ECO:0007669"/>
    <property type="project" value="UniProtKB-UniRule"/>
</dbReference>
<dbReference type="Gene3D" id="4.10.830.30">
    <property type="entry name" value="Ribosomal protein L31"/>
    <property type="match status" value="1"/>
</dbReference>
<dbReference type="HAMAP" id="MF_00501">
    <property type="entry name" value="Ribosomal_bL31_1"/>
    <property type="match status" value="1"/>
</dbReference>
<dbReference type="InterPro" id="IPR034704">
    <property type="entry name" value="Ribosomal_bL28/bL31-like_sf"/>
</dbReference>
<dbReference type="InterPro" id="IPR002150">
    <property type="entry name" value="Ribosomal_bL31"/>
</dbReference>
<dbReference type="InterPro" id="IPR027491">
    <property type="entry name" value="Ribosomal_bL31_A"/>
</dbReference>
<dbReference type="InterPro" id="IPR042105">
    <property type="entry name" value="Ribosomal_bL31_sf"/>
</dbReference>
<dbReference type="NCBIfam" id="TIGR00105">
    <property type="entry name" value="L31"/>
    <property type="match status" value="1"/>
</dbReference>
<dbReference type="NCBIfam" id="NF000612">
    <property type="entry name" value="PRK00019.1"/>
    <property type="match status" value="1"/>
</dbReference>
<dbReference type="NCBIfam" id="NF001809">
    <property type="entry name" value="PRK00528.1"/>
    <property type="match status" value="1"/>
</dbReference>
<dbReference type="PANTHER" id="PTHR33280">
    <property type="entry name" value="50S RIBOSOMAL PROTEIN L31, CHLOROPLASTIC"/>
    <property type="match status" value="1"/>
</dbReference>
<dbReference type="PANTHER" id="PTHR33280:SF1">
    <property type="entry name" value="LARGE RIBOSOMAL SUBUNIT PROTEIN BL31C"/>
    <property type="match status" value="1"/>
</dbReference>
<dbReference type="Pfam" id="PF01197">
    <property type="entry name" value="Ribosomal_L31"/>
    <property type="match status" value="1"/>
</dbReference>
<dbReference type="PRINTS" id="PR01249">
    <property type="entry name" value="RIBOSOMALL31"/>
</dbReference>
<dbReference type="SUPFAM" id="SSF143800">
    <property type="entry name" value="L28p-like"/>
    <property type="match status" value="1"/>
</dbReference>
<dbReference type="PROSITE" id="PS01143">
    <property type="entry name" value="RIBOSOMAL_L31"/>
    <property type="match status" value="1"/>
</dbReference>
<comment type="function">
    <text evidence="1">Binds the 23S rRNA.</text>
</comment>
<comment type="subunit">
    <text evidence="1">Part of the 50S ribosomal subunit.</text>
</comment>
<comment type="similarity">
    <text evidence="1">Belongs to the bacterial ribosomal protein bL31 family. Type A subfamily.</text>
</comment>
<feature type="chain" id="PRO_1000126586" description="Large ribosomal subunit protein bL31">
    <location>
        <begin position="1"/>
        <end position="75"/>
    </location>
</feature>
<organism>
    <name type="scientific">Chlorobium phaeobacteroides (strain BS1)</name>
    <dbReference type="NCBI Taxonomy" id="331678"/>
    <lineage>
        <taxon>Bacteria</taxon>
        <taxon>Pseudomonadati</taxon>
        <taxon>Chlorobiota</taxon>
        <taxon>Chlorobiia</taxon>
        <taxon>Chlorobiales</taxon>
        <taxon>Chlorobiaceae</taxon>
        <taxon>Chlorobium/Pelodictyon group</taxon>
        <taxon>Chlorobium</taxon>
    </lineage>
</organism>
<protein>
    <recommendedName>
        <fullName evidence="1">Large ribosomal subunit protein bL31</fullName>
    </recommendedName>
    <alternativeName>
        <fullName evidence="2">50S ribosomal protein L31</fullName>
    </alternativeName>
</protein>
<evidence type="ECO:0000255" key="1">
    <source>
        <dbReference type="HAMAP-Rule" id="MF_00501"/>
    </source>
</evidence>
<evidence type="ECO:0000305" key="2"/>
<gene>
    <name evidence="1" type="primary">rpmE</name>
    <name type="ordered locus">Cphamn1_2060</name>
</gene>
<proteinExistence type="inferred from homology"/>
<keyword id="KW-0687">Ribonucleoprotein</keyword>
<keyword id="KW-0689">Ribosomal protein</keyword>
<keyword id="KW-0694">RNA-binding</keyword>
<keyword id="KW-0699">rRNA-binding</keyword>
<name>RL31_CHLPB</name>